<sequence length="434" mass="48227">MNIVVVGLSHKTASVDIREKVAFAPTQMEKPLRALLAIEDIAEAVIVSTCNRVEVYISTRDIAGGMARIKRFLADYHGISPEILEPHLYAHHGEAAIRHVFRVASSLDSMVVGEPQILGQIKTAYGYAAEFKTSGIILNRFLHKAFSVAKRVRTETKIASSAVSVSFAAVELARKIFGNLSDKTVMLIGAGEMCELAAKHFINNGVRGVMVTNRTYERAVKLAEEFEGKPVSFDDLFDQLHKADIVLSSTGATQFIIKPKDVEEVIRRRKLKPMFFIDIAVPRDIDPKVNDVENVYLYDMDDLQGVVASNLQQRAEEAKKAEAIIDEEIGQFHKWLSNLEVTPTIVALRSKFEETRKAELEKTLASWKDLPPDGAKRLEALTTAIVNKLLHPPTATLKRVGQGGRTDLYVDALRTLFELQTGESEAEELGELEE</sequence>
<proteinExistence type="inferred from homology"/>
<reference key="1">
    <citation type="journal article" date="2009" name="BMC Microbiol.">
        <title>The genome sequence of Geobacter metallireducens: features of metabolism, physiology and regulation common and dissimilar to Geobacter sulfurreducens.</title>
        <authorList>
            <person name="Aklujkar M."/>
            <person name="Krushkal J."/>
            <person name="DiBartolo G."/>
            <person name="Lapidus A."/>
            <person name="Land M.L."/>
            <person name="Lovley D.R."/>
        </authorList>
    </citation>
    <scope>NUCLEOTIDE SEQUENCE [LARGE SCALE GENOMIC DNA]</scope>
    <source>
        <strain>ATCC 53774 / DSM 7210 / GS-15</strain>
    </source>
</reference>
<accession>Q39QM8</accession>
<gene>
    <name evidence="1" type="primary">hemA</name>
    <name type="ordered locus">Gmet_3233</name>
</gene>
<dbReference type="EC" id="1.2.1.70" evidence="1"/>
<dbReference type="EMBL" id="CP000148">
    <property type="protein sequence ID" value="ABB33446.1"/>
    <property type="molecule type" value="Genomic_DNA"/>
</dbReference>
<dbReference type="RefSeq" id="WP_004512672.1">
    <property type="nucleotide sequence ID" value="NC_007517.1"/>
</dbReference>
<dbReference type="SMR" id="Q39QM8"/>
<dbReference type="STRING" id="269799.Gmet_3233"/>
<dbReference type="KEGG" id="gme:Gmet_3233"/>
<dbReference type="eggNOG" id="COG0373">
    <property type="taxonomic scope" value="Bacteria"/>
</dbReference>
<dbReference type="HOGENOM" id="CLU_035113_2_2_7"/>
<dbReference type="UniPathway" id="UPA00251">
    <property type="reaction ID" value="UER00316"/>
</dbReference>
<dbReference type="Proteomes" id="UP000007073">
    <property type="component" value="Chromosome"/>
</dbReference>
<dbReference type="GO" id="GO:0008883">
    <property type="term" value="F:glutamyl-tRNA reductase activity"/>
    <property type="evidence" value="ECO:0007669"/>
    <property type="project" value="UniProtKB-UniRule"/>
</dbReference>
<dbReference type="GO" id="GO:0050661">
    <property type="term" value="F:NADP binding"/>
    <property type="evidence" value="ECO:0007669"/>
    <property type="project" value="InterPro"/>
</dbReference>
<dbReference type="GO" id="GO:0019353">
    <property type="term" value="P:protoporphyrinogen IX biosynthetic process from glutamate"/>
    <property type="evidence" value="ECO:0007669"/>
    <property type="project" value="TreeGrafter"/>
</dbReference>
<dbReference type="CDD" id="cd05213">
    <property type="entry name" value="NAD_bind_Glutamyl_tRNA_reduct"/>
    <property type="match status" value="1"/>
</dbReference>
<dbReference type="FunFam" id="3.30.460.30:FF:000001">
    <property type="entry name" value="Glutamyl-tRNA reductase"/>
    <property type="match status" value="1"/>
</dbReference>
<dbReference type="FunFam" id="3.40.50.720:FF:000031">
    <property type="entry name" value="Glutamyl-tRNA reductase"/>
    <property type="match status" value="1"/>
</dbReference>
<dbReference type="Gene3D" id="3.30.460.30">
    <property type="entry name" value="Glutamyl-tRNA reductase, N-terminal domain"/>
    <property type="match status" value="1"/>
</dbReference>
<dbReference type="Gene3D" id="3.40.50.720">
    <property type="entry name" value="NAD(P)-binding Rossmann-like Domain"/>
    <property type="match status" value="1"/>
</dbReference>
<dbReference type="HAMAP" id="MF_00087">
    <property type="entry name" value="Glu_tRNA_reductase"/>
    <property type="match status" value="1"/>
</dbReference>
<dbReference type="InterPro" id="IPR000343">
    <property type="entry name" value="4pyrrol_synth_GluRdtase"/>
</dbReference>
<dbReference type="InterPro" id="IPR015896">
    <property type="entry name" value="4pyrrol_synth_GluRdtase_dimer"/>
</dbReference>
<dbReference type="InterPro" id="IPR015895">
    <property type="entry name" value="4pyrrol_synth_GluRdtase_N"/>
</dbReference>
<dbReference type="InterPro" id="IPR018214">
    <property type="entry name" value="GluRdtase_CS"/>
</dbReference>
<dbReference type="InterPro" id="IPR036453">
    <property type="entry name" value="GluRdtase_dimer_dom_sf"/>
</dbReference>
<dbReference type="InterPro" id="IPR036343">
    <property type="entry name" value="GluRdtase_N_sf"/>
</dbReference>
<dbReference type="InterPro" id="IPR036291">
    <property type="entry name" value="NAD(P)-bd_dom_sf"/>
</dbReference>
<dbReference type="InterPro" id="IPR006151">
    <property type="entry name" value="Shikm_DH/Glu-tRNA_Rdtase"/>
</dbReference>
<dbReference type="NCBIfam" id="TIGR01035">
    <property type="entry name" value="hemA"/>
    <property type="match status" value="1"/>
</dbReference>
<dbReference type="NCBIfam" id="NF000744">
    <property type="entry name" value="PRK00045.1-3"/>
    <property type="match status" value="1"/>
</dbReference>
<dbReference type="PANTHER" id="PTHR43013">
    <property type="entry name" value="GLUTAMYL-TRNA REDUCTASE"/>
    <property type="match status" value="1"/>
</dbReference>
<dbReference type="PANTHER" id="PTHR43013:SF1">
    <property type="entry name" value="GLUTAMYL-TRNA REDUCTASE"/>
    <property type="match status" value="1"/>
</dbReference>
<dbReference type="Pfam" id="PF00745">
    <property type="entry name" value="GlutR_dimer"/>
    <property type="match status" value="1"/>
</dbReference>
<dbReference type="Pfam" id="PF05201">
    <property type="entry name" value="GlutR_N"/>
    <property type="match status" value="1"/>
</dbReference>
<dbReference type="Pfam" id="PF01488">
    <property type="entry name" value="Shikimate_DH"/>
    <property type="match status" value="1"/>
</dbReference>
<dbReference type="PIRSF" id="PIRSF000445">
    <property type="entry name" value="4pyrrol_synth_GluRdtase"/>
    <property type="match status" value="1"/>
</dbReference>
<dbReference type="SUPFAM" id="SSF69742">
    <property type="entry name" value="Glutamyl tRNA-reductase catalytic, N-terminal domain"/>
    <property type="match status" value="1"/>
</dbReference>
<dbReference type="SUPFAM" id="SSF69075">
    <property type="entry name" value="Glutamyl tRNA-reductase dimerization domain"/>
    <property type="match status" value="1"/>
</dbReference>
<dbReference type="SUPFAM" id="SSF51735">
    <property type="entry name" value="NAD(P)-binding Rossmann-fold domains"/>
    <property type="match status" value="1"/>
</dbReference>
<dbReference type="PROSITE" id="PS00747">
    <property type="entry name" value="GLUTR"/>
    <property type="match status" value="1"/>
</dbReference>
<protein>
    <recommendedName>
        <fullName evidence="1">Glutamyl-tRNA reductase</fullName>
        <shortName evidence="1">GluTR</shortName>
        <ecNumber evidence="1">1.2.1.70</ecNumber>
    </recommendedName>
</protein>
<comment type="function">
    <text evidence="1">Catalyzes the NADPH-dependent reduction of glutamyl-tRNA(Glu) to glutamate 1-semialdehyde (GSA).</text>
</comment>
<comment type="catalytic activity">
    <reaction evidence="1">
        <text>(S)-4-amino-5-oxopentanoate + tRNA(Glu) + NADP(+) = L-glutamyl-tRNA(Glu) + NADPH + H(+)</text>
        <dbReference type="Rhea" id="RHEA:12344"/>
        <dbReference type="Rhea" id="RHEA-COMP:9663"/>
        <dbReference type="Rhea" id="RHEA-COMP:9680"/>
        <dbReference type="ChEBI" id="CHEBI:15378"/>
        <dbReference type="ChEBI" id="CHEBI:57501"/>
        <dbReference type="ChEBI" id="CHEBI:57783"/>
        <dbReference type="ChEBI" id="CHEBI:58349"/>
        <dbReference type="ChEBI" id="CHEBI:78442"/>
        <dbReference type="ChEBI" id="CHEBI:78520"/>
        <dbReference type="EC" id="1.2.1.70"/>
    </reaction>
</comment>
<comment type="pathway">
    <text evidence="1">Porphyrin-containing compound metabolism; protoporphyrin-IX biosynthesis; 5-aminolevulinate from L-glutamyl-tRNA(Glu): step 1/2.</text>
</comment>
<comment type="subunit">
    <text evidence="1">Homodimer.</text>
</comment>
<comment type="domain">
    <text evidence="1">Possesses an unusual extended V-shaped dimeric structure with each monomer consisting of three distinct domains arranged along a curved 'spinal' alpha-helix. The N-terminal catalytic domain specifically recognizes the glutamate moiety of the substrate. The second domain is the NADPH-binding domain, and the third C-terminal domain is responsible for dimerization.</text>
</comment>
<comment type="miscellaneous">
    <text evidence="1">During catalysis, the active site Cys acts as a nucleophile attacking the alpha-carbonyl group of tRNA-bound glutamate with the formation of a thioester intermediate between enzyme and glutamate, and the concomitant release of tRNA(Glu). The thioester intermediate is finally reduced by direct hydride transfer from NADPH, to form the product GSA.</text>
</comment>
<comment type="similarity">
    <text evidence="1">Belongs to the glutamyl-tRNA reductase family.</text>
</comment>
<name>HEM1_GEOMG</name>
<keyword id="KW-0521">NADP</keyword>
<keyword id="KW-0560">Oxidoreductase</keyword>
<keyword id="KW-0627">Porphyrin biosynthesis</keyword>
<keyword id="KW-1185">Reference proteome</keyword>
<evidence type="ECO:0000255" key="1">
    <source>
        <dbReference type="HAMAP-Rule" id="MF_00087"/>
    </source>
</evidence>
<organism>
    <name type="scientific">Geobacter metallireducens (strain ATCC 53774 / DSM 7210 / GS-15)</name>
    <dbReference type="NCBI Taxonomy" id="269799"/>
    <lineage>
        <taxon>Bacteria</taxon>
        <taxon>Pseudomonadati</taxon>
        <taxon>Thermodesulfobacteriota</taxon>
        <taxon>Desulfuromonadia</taxon>
        <taxon>Geobacterales</taxon>
        <taxon>Geobacteraceae</taxon>
        <taxon>Geobacter</taxon>
    </lineage>
</organism>
<feature type="chain" id="PRO_1000004625" description="Glutamyl-tRNA reductase">
    <location>
        <begin position="1"/>
        <end position="434"/>
    </location>
</feature>
<feature type="active site" description="Nucleophile" evidence="1">
    <location>
        <position position="50"/>
    </location>
</feature>
<feature type="binding site" evidence="1">
    <location>
        <begin position="49"/>
        <end position="52"/>
    </location>
    <ligand>
        <name>substrate</name>
    </ligand>
</feature>
<feature type="binding site" evidence="1">
    <location>
        <position position="109"/>
    </location>
    <ligand>
        <name>substrate</name>
    </ligand>
</feature>
<feature type="binding site" evidence="1">
    <location>
        <begin position="114"/>
        <end position="116"/>
    </location>
    <ligand>
        <name>substrate</name>
    </ligand>
</feature>
<feature type="binding site" evidence="1">
    <location>
        <position position="120"/>
    </location>
    <ligand>
        <name>substrate</name>
    </ligand>
</feature>
<feature type="binding site" evidence="1">
    <location>
        <begin position="189"/>
        <end position="194"/>
    </location>
    <ligand>
        <name>NADP(+)</name>
        <dbReference type="ChEBI" id="CHEBI:58349"/>
    </ligand>
</feature>
<feature type="site" description="Important for activity" evidence="1">
    <location>
        <position position="99"/>
    </location>
</feature>